<protein>
    <recommendedName>
        <fullName evidence="2">Elongation factor Tu</fullName>
        <shortName evidence="2">EF-Tu</shortName>
        <ecNumber evidence="2">3.6.5.3</ecNumber>
    </recommendedName>
</protein>
<gene>
    <name evidence="2" type="primary">tuf1</name>
    <name type="ordered locus">AZC_0880</name>
</gene>
<gene>
    <name evidence="2" type="primary">tuf2</name>
    <name type="ordered locus">AZC_2556</name>
</gene>
<reference key="1">
    <citation type="submission" date="2007-04" db="EMBL/GenBank/DDBJ databases">
        <title>Complete genome sequence of the nitrogen-fixing bacterium Azorhizobium caulinodans ORS571.</title>
        <authorList>
            <person name="Lee K.B."/>
            <person name="Backer P.D."/>
            <person name="Aono T."/>
            <person name="Liu C.T."/>
            <person name="Suzuki S."/>
            <person name="Suzuki T."/>
            <person name="Kaneko T."/>
            <person name="Yamada M."/>
            <person name="Tabata S."/>
            <person name="Kupfer D.M."/>
            <person name="Najar F.Z."/>
            <person name="Wiley G.B."/>
            <person name="Roe B."/>
            <person name="Binnewies T."/>
            <person name="Ussery D."/>
            <person name="Vereecke D."/>
            <person name="Gevers D."/>
            <person name="Holsters M."/>
            <person name="Oyaizu H."/>
        </authorList>
    </citation>
    <scope>NUCLEOTIDE SEQUENCE [LARGE SCALE GENOMIC DNA]</scope>
    <source>
        <strain>ATCC 43989 / DSM 5975 / JCM 20966 / LMG 6465 / NBRC 14845 / NCIMB 13405 / ORS 571</strain>
    </source>
</reference>
<evidence type="ECO:0000250" key="1"/>
<evidence type="ECO:0000255" key="2">
    <source>
        <dbReference type="HAMAP-Rule" id="MF_00118"/>
    </source>
</evidence>
<proteinExistence type="inferred from homology"/>
<feature type="chain" id="PRO_0000337319" description="Elongation factor Tu">
    <location>
        <begin position="1"/>
        <end position="397"/>
    </location>
</feature>
<feature type="domain" description="tr-type G">
    <location>
        <begin position="10"/>
        <end position="207"/>
    </location>
</feature>
<feature type="region of interest" description="G1" evidence="1">
    <location>
        <begin position="19"/>
        <end position="26"/>
    </location>
</feature>
<feature type="region of interest" description="G2" evidence="1">
    <location>
        <begin position="61"/>
        <end position="65"/>
    </location>
</feature>
<feature type="region of interest" description="G3" evidence="1">
    <location>
        <begin position="82"/>
        <end position="85"/>
    </location>
</feature>
<feature type="region of interest" description="G4" evidence="1">
    <location>
        <begin position="137"/>
        <end position="140"/>
    </location>
</feature>
<feature type="region of interest" description="G5" evidence="1">
    <location>
        <begin position="175"/>
        <end position="177"/>
    </location>
</feature>
<feature type="binding site" evidence="2">
    <location>
        <begin position="19"/>
        <end position="26"/>
    </location>
    <ligand>
        <name>GTP</name>
        <dbReference type="ChEBI" id="CHEBI:37565"/>
    </ligand>
</feature>
<feature type="binding site" evidence="2">
    <location>
        <position position="26"/>
    </location>
    <ligand>
        <name>Mg(2+)</name>
        <dbReference type="ChEBI" id="CHEBI:18420"/>
    </ligand>
</feature>
<feature type="binding site" evidence="2">
    <location>
        <begin position="82"/>
        <end position="86"/>
    </location>
    <ligand>
        <name>GTP</name>
        <dbReference type="ChEBI" id="CHEBI:37565"/>
    </ligand>
</feature>
<feature type="binding site" evidence="2">
    <location>
        <begin position="137"/>
        <end position="140"/>
    </location>
    <ligand>
        <name>GTP</name>
        <dbReference type="ChEBI" id="CHEBI:37565"/>
    </ligand>
</feature>
<accession>A8HTW6</accession>
<name>EFTU_AZOC5</name>
<dbReference type="EC" id="3.6.5.3" evidence="2"/>
<dbReference type="EMBL" id="AP009384">
    <property type="protein sequence ID" value="BAF86878.1"/>
    <property type="molecule type" value="Genomic_DNA"/>
</dbReference>
<dbReference type="EMBL" id="AP009384">
    <property type="protein sequence ID" value="BAF88554.1"/>
    <property type="molecule type" value="Genomic_DNA"/>
</dbReference>
<dbReference type="SMR" id="A8HTW6"/>
<dbReference type="STRING" id="438753.AZC_0880"/>
<dbReference type="KEGG" id="azc:AZC_0880"/>
<dbReference type="KEGG" id="azc:AZC_2556"/>
<dbReference type="eggNOG" id="COG0050">
    <property type="taxonomic scope" value="Bacteria"/>
</dbReference>
<dbReference type="HOGENOM" id="CLU_007265_0_1_5"/>
<dbReference type="Proteomes" id="UP000000270">
    <property type="component" value="Chromosome"/>
</dbReference>
<dbReference type="GO" id="GO:0005829">
    <property type="term" value="C:cytosol"/>
    <property type="evidence" value="ECO:0007669"/>
    <property type="project" value="TreeGrafter"/>
</dbReference>
<dbReference type="GO" id="GO:0005525">
    <property type="term" value="F:GTP binding"/>
    <property type="evidence" value="ECO:0007669"/>
    <property type="project" value="UniProtKB-UniRule"/>
</dbReference>
<dbReference type="GO" id="GO:0003924">
    <property type="term" value="F:GTPase activity"/>
    <property type="evidence" value="ECO:0007669"/>
    <property type="project" value="InterPro"/>
</dbReference>
<dbReference type="GO" id="GO:0097216">
    <property type="term" value="F:guanosine tetraphosphate binding"/>
    <property type="evidence" value="ECO:0007669"/>
    <property type="project" value="UniProtKB-ARBA"/>
</dbReference>
<dbReference type="GO" id="GO:0003746">
    <property type="term" value="F:translation elongation factor activity"/>
    <property type="evidence" value="ECO:0007669"/>
    <property type="project" value="UniProtKB-UniRule"/>
</dbReference>
<dbReference type="CDD" id="cd01884">
    <property type="entry name" value="EF_Tu"/>
    <property type="match status" value="1"/>
</dbReference>
<dbReference type="CDD" id="cd03697">
    <property type="entry name" value="EFTU_II"/>
    <property type="match status" value="1"/>
</dbReference>
<dbReference type="CDD" id="cd03707">
    <property type="entry name" value="EFTU_III"/>
    <property type="match status" value="1"/>
</dbReference>
<dbReference type="FunFam" id="2.40.30.10:FF:000001">
    <property type="entry name" value="Elongation factor Tu"/>
    <property type="match status" value="1"/>
</dbReference>
<dbReference type="FunFam" id="3.40.50.300:FF:000003">
    <property type="entry name" value="Elongation factor Tu"/>
    <property type="match status" value="1"/>
</dbReference>
<dbReference type="Gene3D" id="3.40.50.300">
    <property type="entry name" value="P-loop containing nucleotide triphosphate hydrolases"/>
    <property type="match status" value="1"/>
</dbReference>
<dbReference type="Gene3D" id="2.40.30.10">
    <property type="entry name" value="Translation factors"/>
    <property type="match status" value="2"/>
</dbReference>
<dbReference type="HAMAP" id="MF_00118_B">
    <property type="entry name" value="EF_Tu_B"/>
    <property type="match status" value="1"/>
</dbReference>
<dbReference type="InterPro" id="IPR041709">
    <property type="entry name" value="EF-Tu_GTP-bd"/>
</dbReference>
<dbReference type="InterPro" id="IPR050055">
    <property type="entry name" value="EF-Tu_GTPase"/>
</dbReference>
<dbReference type="InterPro" id="IPR004161">
    <property type="entry name" value="EFTu-like_2"/>
</dbReference>
<dbReference type="InterPro" id="IPR033720">
    <property type="entry name" value="EFTU_2"/>
</dbReference>
<dbReference type="InterPro" id="IPR031157">
    <property type="entry name" value="G_TR_CS"/>
</dbReference>
<dbReference type="InterPro" id="IPR027417">
    <property type="entry name" value="P-loop_NTPase"/>
</dbReference>
<dbReference type="InterPro" id="IPR005225">
    <property type="entry name" value="Small_GTP-bd"/>
</dbReference>
<dbReference type="InterPro" id="IPR000795">
    <property type="entry name" value="T_Tr_GTP-bd_dom"/>
</dbReference>
<dbReference type="InterPro" id="IPR009000">
    <property type="entry name" value="Transl_B-barrel_sf"/>
</dbReference>
<dbReference type="InterPro" id="IPR009001">
    <property type="entry name" value="Transl_elong_EF1A/Init_IF2_C"/>
</dbReference>
<dbReference type="InterPro" id="IPR004541">
    <property type="entry name" value="Transl_elong_EFTu/EF1A_bac/org"/>
</dbReference>
<dbReference type="InterPro" id="IPR004160">
    <property type="entry name" value="Transl_elong_EFTu/EF1A_C"/>
</dbReference>
<dbReference type="NCBIfam" id="TIGR00485">
    <property type="entry name" value="EF-Tu"/>
    <property type="match status" value="1"/>
</dbReference>
<dbReference type="NCBIfam" id="NF000766">
    <property type="entry name" value="PRK00049.1"/>
    <property type="match status" value="1"/>
</dbReference>
<dbReference type="NCBIfam" id="NF009372">
    <property type="entry name" value="PRK12735.1"/>
    <property type="match status" value="1"/>
</dbReference>
<dbReference type="NCBIfam" id="NF009373">
    <property type="entry name" value="PRK12736.1"/>
    <property type="match status" value="1"/>
</dbReference>
<dbReference type="NCBIfam" id="TIGR00231">
    <property type="entry name" value="small_GTP"/>
    <property type="match status" value="1"/>
</dbReference>
<dbReference type="PANTHER" id="PTHR43721:SF22">
    <property type="entry name" value="ELONGATION FACTOR TU, MITOCHONDRIAL"/>
    <property type="match status" value="1"/>
</dbReference>
<dbReference type="PANTHER" id="PTHR43721">
    <property type="entry name" value="ELONGATION FACTOR TU-RELATED"/>
    <property type="match status" value="1"/>
</dbReference>
<dbReference type="Pfam" id="PF00009">
    <property type="entry name" value="GTP_EFTU"/>
    <property type="match status" value="1"/>
</dbReference>
<dbReference type="Pfam" id="PF03144">
    <property type="entry name" value="GTP_EFTU_D2"/>
    <property type="match status" value="1"/>
</dbReference>
<dbReference type="Pfam" id="PF03143">
    <property type="entry name" value="GTP_EFTU_D3"/>
    <property type="match status" value="1"/>
</dbReference>
<dbReference type="PRINTS" id="PR00315">
    <property type="entry name" value="ELONGATNFCT"/>
</dbReference>
<dbReference type="SUPFAM" id="SSF50465">
    <property type="entry name" value="EF-Tu/eEF-1alpha/eIF2-gamma C-terminal domain"/>
    <property type="match status" value="1"/>
</dbReference>
<dbReference type="SUPFAM" id="SSF52540">
    <property type="entry name" value="P-loop containing nucleoside triphosphate hydrolases"/>
    <property type="match status" value="1"/>
</dbReference>
<dbReference type="SUPFAM" id="SSF50447">
    <property type="entry name" value="Translation proteins"/>
    <property type="match status" value="1"/>
</dbReference>
<dbReference type="PROSITE" id="PS00301">
    <property type="entry name" value="G_TR_1"/>
    <property type="match status" value="1"/>
</dbReference>
<dbReference type="PROSITE" id="PS51722">
    <property type="entry name" value="G_TR_2"/>
    <property type="match status" value="1"/>
</dbReference>
<organism>
    <name type="scientific">Azorhizobium caulinodans (strain ATCC 43989 / DSM 5975 / JCM 20966 / LMG 6465 / NBRC 14845 / NCIMB 13405 / ORS 571)</name>
    <dbReference type="NCBI Taxonomy" id="438753"/>
    <lineage>
        <taxon>Bacteria</taxon>
        <taxon>Pseudomonadati</taxon>
        <taxon>Pseudomonadota</taxon>
        <taxon>Alphaproteobacteria</taxon>
        <taxon>Hyphomicrobiales</taxon>
        <taxon>Xanthobacteraceae</taxon>
        <taxon>Azorhizobium</taxon>
    </lineage>
</organism>
<comment type="function">
    <text evidence="2">GTP hydrolase that promotes the GTP-dependent binding of aminoacyl-tRNA to the A-site of ribosomes during protein biosynthesis.</text>
</comment>
<comment type="catalytic activity">
    <reaction evidence="2">
        <text>GTP + H2O = GDP + phosphate + H(+)</text>
        <dbReference type="Rhea" id="RHEA:19669"/>
        <dbReference type="ChEBI" id="CHEBI:15377"/>
        <dbReference type="ChEBI" id="CHEBI:15378"/>
        <dbReference type="ChEBI" id="CHEBI:37565"/>
        <dbReference type="ChEBI" id="CHEBI:43474"/>
        <dbReference type="ChEBI" id="CHEBI:58189"/>
        <dbReference type="EC" id="3.6.5.3"/>
    </reaction>
    <physiologicalReaction direction="left-to-right" evidence="2">
        <dbReference type="Rhea" id="RHEA:19670"/>
    </physiologicalReaction>
</comment>
<comment type="subunit">
    <text evidence="2">Monomer.</text>
</comment>
<comment type="subcellular location">
    <subcellularLocation>
        <location evidence="2">Cytoplasm</location>
    </subcellularLocation>
</comment>
<comment type="similarity">
    <text evidence="2">Belongs to the TRAFAC class translation factor GTPase superfamily. Classic translation factor GTPase family. EF-Tu/EF-1A subfamily.</text>
</comment>
<sequence length="397" mass="43315">MAKAKFERNKPHCNIGTIGHVDHGKTSLTAAITKVLAETSGGATFTAYDQIDKAPEEKARGITISTAHVEYETQNRHYAHVDCPGHADYVKNMITGAAQMDGAILVVSAADGPMPQTREHILLARQVGVPALVVFLNKCDMVDDPELLELVELEVRELLSKYDFPGDDIPIVRGSALCALENKSPELGAEAILKLMAEVDKYIPQPERPVDQPFLMPIEDVFSISGRGTVVTGRVERGIVKVGDEVEIVGIRPTVKTTVTGIEMFRKLLDQGQAGDNVGVLLRGTKREDVERGQVVCKPGSVKPHTKFKAEAYILTKEEGGRHTPFFTNYRPQFYFRTTDVTGVVTLPEGTEMVMPGDNISVDVQLIVPIAMEEKLRFAIREGGRTVGAGVVASIIE</sequence>
<keyword id="KW-0963">Cytoplasm</keyword>
<keyword id="KW-0251">Elongation factor</keyword>
<keyword id="KW-0342">GTP-binding</keyword>
<keyword id="KW-0378">Hydrolase</keyword>
<keyword id="KW-0460">Magnesium</keyword>
<keyword id="KW-0479">Metal-binding</keyword>
<keyword id="KW-0547">Nucleotide-binding</keyword>
<keyword id="KW-0648">Protein biosynthesis</keyword>
<keyword id="KW-1185">Reference proteome</keyword>